<protein>
    <recommendedName>
        <fullName>Geranylgeranyl pyrophosphate synthase</fullName>
        <shortName>GGPP synthase</shortName>
        <shortName>GGPPSase</shortName>
        <ecNumber>2.5.1.-</ecNumber>
    </recommendedName>
    <alternativeName>
        <fullName>(2E,6E)-farnesyl diphosphate synthase</fullName>
    </alternativeName>
    <alternativeName>
        <fullName>Dimethylallyltranstransferase</fullName>
        <ecNumber>2.5.1.1</ecNumber>
    </alternativeName>
    <alternativeName>
        <fullName>Farnesyl diphosphate synthase</fullName>
    </alternativeName>
    <alternativeName>
        <fullName>Farnesyltranstransferase</fullName>
        <ecNumber>2.5.1.29</ecNumber>
    </alternativeName>
    <alternativeName>
        <fullName>Geranylgeranyl diphosphate synthase</fullName>
    </alternativeName>
    <alternativeName>
        <fullName>Geranyltranstransferase</fullName>
        <ecNumber>2.5.1.10</ecNumber>
    </alternativeName>
</protein>
<keyword id="KW-0963">Cytoplasm</keyword>
<keyword id="KW-0414">Isoprene biosynthesis</keyword>
<keyword id="KW-0460">Magnesium</keyword>
<keyword id="KW-0479">Metal-binding</keyword>
<keyword id="KW-1185">Reference proteome</keyword>
<keyword id="KW-0808">Transferase</keyword>
<sequence>MENSKIHFSYPLDKSDFKLIEPYTYICESSGKGFRNALIKSFDYWLKVGDEKVQDISKVIQGLHGASLLIDDIEDNSKLRRGKPVAHSIYGIPQTINSANFVYFLIMDQCNKLGDPKATTIFIEELIRLHRGQGYDIFWRDTNTSPSEQEYMNMVNEKTGGLFRLGLRLLQAFSDNNTNYIDLVEDLGMYYQIRDDLINLVSVDYQQNKSFCEDISEGKFSFPIIHAINADSNDNRLLRILKQKTEDRSVKEHALEYIKSKGSLEYTEKKLNVLKEKIIKQINDLGGNPILMKLMESLENSSI</sequence>
<organism>
    <name type="scientific">Dictyostelium discoideum</name>
    <name type="common">Social amoeba</name>
    <dbReference type="NCBI Taxonomy" id="44689"/>
    <lineage>
        <taxon>Eukaryota</taxon>
        <taxon>Amoebozoa</taxon>
        <taxon>Evosea</taxon>
        <taxon>Eumycetozoa</taxon>
        <taxon>Dictyostelia</taxon>
        <taxon>Dictyosteliales</taxon>
        <taxon>Dictyosteliaceae</taxon>
        <taxon>Dictyostelium</taxon>
    </lineage>
</organism>
<feature type="chain" id="PRO_0000327749" description="Geranylgeranyl pyrophosphate synthase">
    <location>
        <begin position="1"/>
        <end position="303"/>
    </location>
</feature>
<feature type="binding site" evidence="2">
    <location>
        <position position="32"/>
    </location>
    <ligand>
        <name>isopentenyl diphosphate</name>
        <dbReference type="ChEBI" id="CHEBI:128769"/>
    </ligand>
</feature>
<feature type="binding site" evidence="2">
    <location>
        <position position="35"/>
    </location>
    <ligand>
        <name>isopentenyl diphosphate</name>
        <dbReference type="ChEBI" id="CHEBI:128769"/>
    </ligand>
</feature>
<feature type="binding site" evidence="3">
    <location>
        <position position="64"/>
    </location>
    <ligand>
        <name>isopentenyl diphosphate</name>
        <dbReference type="ChEBI" id="CHEBI:128769"/>
    </ligand>
</feature>
<feature type="binding site" evidence="2">
    <location>
        <position position="71"/>
    </location>
    <ligand>
        <name>Mg(2+)</name>
        <dbReference type="ChEBI" id="CHEBI:18420"/>
        <label>1</label>
    </ligand>
</feature>
<feature type="binding site" evidence="2">
    <location>
        <position position="71"/>
    </location>
    <ligand>
        <name>Mg(2+)</name>
        <dbReference type="ChEBI" id="CHEBI:18420"/>
        <label>2</label>
    </ligand>
</feature>
<feature type="binding site" evidence="2">
    <location>
        <position position="75"/>
    </location>
    <ligand>
        <name>Mg(2+)</name>
        <dbReference type="ChEBI" id="CHEBI:18420"/>
        <label>1</label>
    </ligand>
</feature>
<feature type="binding site" evidence="2">
    <location>
        <position position="75"/>
    </location>
    <ligand>
        <name>Mg(2+)</name>
        <dbReference type="ChEBI" id="CHEBI:18420"/>
        <label>2</label>
    </ligand>
</feature>
<feature type="binding site" evidence="1">
    <location>
        <position position="80"/>
    </location>
    <ligand>
        <name>dimethylallyl diphosphate</name>
        <dbReference type="ChEBI" id="CHEBI:57623"/>
    </ligand>
</feature>
<feature type="binding site" evidence="2">
    <location>
        <position position="81"/>
    </location>
    <ligand>
        <name>isopentenyl diphosphate</name>
        <dbReference type="ChEBI" id="CHEBI:128769"/>
    </ligand>
</feature>
<feature type="binding site" evidence="1">
    <location>
        <position position="158"/>
    </location>
    <ligand>
        <name>dimethylallyl diphosphate</name>
        <dbReference type="ChEBI" id="CHEBI:57623"/>
    </ligand>
</feature>
<feature type="binding site" evidence="1">
    <location>
        <position position="159"/>
    </location>
    <ligand>
        <name>dimethylallyl diphosphate</name>
        <dbReference type="ChEBI" id="CHEBI:57623"/>
    </ligand>
</feature>
<feature type="binding site" evidence="1">
    <location>
        <position position="192"/>
    </location>
    <ligand>
        <name>dimethylallyl diphosphate</name>
        <dbReference type="ChEBI" id="CHEBI:57623"/>
    </ligand>
</feature>
<feature type="binding site" evidence="1">
    <location>
        <position position="209"/>
    </location>
    <ligand>
        <name>dimethylallyl diphosphate</name>
        <dbReference type="ChEBI" id="CHEBI:57623"/>
    </ligand>
</feature>
<feature type="binding site" evidence="1">
    <location>
        <position position="219"/>
    </location>
    <ligand>
        <name>dimethylallyl diphosphate</name>
        <dbReference type="ChEBI" id="CHEBI:57623"/>
    </ligand>
</feature>
<proteinExistence type="inferred from homology"/>
<name>GGPPS_DICDI</name>
<comment type="function">
    <text evidence="1">Catalyzes the trans-addition of the three molecules of IPP onto DMAPP to form geranylgeranyl pyrophosphate, an important precursor of carotenoids and geranylated proteins.</text>
</comment>
<comment type="catalytic activity">
    <reaction>
        <text>isopentenyl diphosphate + dimethylallyl diphosphate = (2E)-geranyl diphosphate + diphosphate</text>
        <dbReference type="Rhea" id="RHEA:22408"/>
        <dbReference type="ChEBI" id="CHEBI:33019"/>
        <dbReference type="ChEBI" id="CHEBI:57623"/>
        <dbReference type="ChEBI" id="CHEBI:58057"/>
        <dbReference type="ChEBI" id="CHEBI:128769"/>
        <dbReference type="EC" id="2.5.1.1"/>
    </reaction>
</comment>
<comment type="catalytic activity">
    <reaction>
        <text>isopentenyl diphosphate + (2E)-geranyl diphosphate = (2E,6E)-farnesyl diphosphate + diphosphate</text>
        <dbReference type="Rhea" id="RHEA:19361"/>
        <dbReference type="ChEBI" id="CHEBI:33019"/>
        <dbReference type="ChEBI" id="CHEBI:58057"/>
        <dbReference type="ChEBI" id="CHEBI:128769"/>
        <dbReference type="ChEBI" id="CHEBI:175763"/>
        <dbReference type="EC" id="2.5.1.10"/>
    </reaction>
</comment>
<comment type="catalytic activity">
    <reaction>
        <text>isopentenyl diphosphate + (2E,6E)-farnesyl diphosphate = (2E,6E,10E)-geranylgeranyl diphosphate + diphosphate</text>
        <dbReference type="Rhea" id="RHEA:17653"/>
        <dbReference type="ChEBI" id="CHEBI:33019"/>
        <dbReference type="ChEBI" id="CHEBI:58756"/>
        <dbReference type="ChEBI" id="CHEBI:128769"/>
        <dbReference type="ChEBI" id="CHEBI:175763"/>
        <dbReference type="EC" id="2.5.1.29"/>
    </reaction>
</comment>
<comment type="cofactor">
    <cofactor evidence="1">
        <name>Mg(2+)</name>
        <dbReference type="ChEBI" id="CHEBI:18420"/>
    </cofactor>
    <text evidence="1">Binds 2 Mg(2+) ions per subunit.</text>
</comment>
<comment type="pathway">
    <text>Isoprenoid biosynthesis; farnesyl diphosphate biosynthesis; farnesyl diphosphate from geranyl diphosphate and isopentenyl diphosphate: step 1/1.</text>
</comment>
<comment type="pathway">
    <text>Isoprenoid biosynthesis; geranyl diphosphate biosynthesis; geranyl diphosphate from dimethylallyl diphosphate and isopentenyl diphosphate: step 1/1.</text>
</comment>
<comment type="pathway">
    <text>Isoprenoid biosynthesis; geranylgeranyl diphosphate biosynthesis; geranylgeranyl diphosphate from farnesyl diphosphate and isopentenyl diphosphate: step 1/1.</text>
</comment>
<comment type="subunit">
    <text evidence="1">Homooligomer.</text>
</comment>
<comment type="subcellular location">
    <subcellularLocation>
        <location evidence="4">Cytoplasm</location>
    </subcellularLocation>
</comment>
<comment type="similarity">
    <text evidence="4">Belongs to the FPP/GGPP synthase family.</text>
</comment>
<reference key="1">
    <citation type="journal article" date="2005" name="Nature">
        <title>The genome of the social amoeba Dictyostelium discoideum.</title>
        <authorList>
            <person name="Eichinger L."/>
            <person name="Pachebat J.A."/>
            <person name="Gloeckner G."/>
            <person name="Rajandream M.A."/>
            <person name="Sucgang R."/>
            <person name="Berriman M."/>
            <person name="Song J."/>
            <person name="Olsen R."/>
            <person name="Szafranski K."/>
            <person name="Xu Q."/>
            <person name="Tunggal B."/>
            <person name="Kummerfeld S."/>
            <person name="Madera M."/>
            <person name="Konfortov B.A."/>
            <person name="Rivero F."/>
            <person name="Bankier A.T."/>
            <person name="Lehmann R."/>
            <person name="Hamlin N."/>
            <person name="Davies R."/>
            <person name="Gaudet P."/>
            <person name="Fey P."/>
            <person name="Pilcher K."/>
            <person name="Chen G."/>
            <person name="Saunders D."/>
            <person name="Sodergren E.J."/>
            <person name="Davis P."/>
            <person name="Kerhornou A."/>
            <person name="Nie X."/>
            <person name="Hall N."/>
            <person name="Anjard C."/>
            <person name="Hemphill L."/>
            <person name="Bason N."/>
            <person name="Farbrother P."/>
            <person name="Desany B."/>
            <person name="Just E."/>
            <person name="Morio T."/>
            <person name="Rost R."/>
            <person name="Churcher C.M."/>
            <person name="Cooper J."/>
            <person name="Haydock S."/>
            <person name="van Driessche N."/>
            <person name="Cronin A."/>
            <person name="Goodhead I."/>
            <person name="Muzny D.M."/>
            <person name="Mourier T."/>
            <person name="Pain A."/>
            <person name="Lu M."/>
            <person name="Harper D."/>
            <person name="Lindsay R."/>
            <person name="Hauser H."/>
            <person name="James K.D."/>
            <person name="Quiles M."/>
            <person name="Madan Babu M."/>
            <person name="Saito T."/>
            <person name="Buchrieser C."/>
            <person name="Wardroper A."/>
            <person name="Felder M."/>
            <person name="Thangavelu M."/>
            <person name="Johnson D."/>
            <person name="Knights A."/>
            <person name="Loulseged H."/>
            <person name="Mungall K.L."/>
            <person name="Oliver K."/>
            <person name="Price C."/>
            <person name="Quail M.A."/>
            <person name="Urushihara H."/>
            <person name="Hernandez J."/>
            <person name="Rabbinowitsch E."/>
            <person name="Steffen D."/>
            <person name="Sanders M."/>
            <person name="Ma J."/>
            <person name="Kohara Y."/>
            <person name="Sharp S."/>
            <person name="Simmonds M.N."/>
            <person name="Spiegler S."/>
            <person name="Tivey A."/>
            <person name="Sugano S."/>
            <person name="White B."/>
            <person name="Walker D."/>
            <person name="Woodward J.R."/>
            <person name="Winckler T."/>
            <person name="Tanaka Y."/>
            <person name="Shaulsky G."/>
            <person name="Schleicher M."/>
            <person name="Weinstock G.M."/>
            <person name="Rosenthal A."/>
            <person name="Cox E.C."/>
            <person name="Chisholm R.L."/>
            <person name="Gibbs R.A."/>
            <person name="Loomis W.F."/>
            <person name="Platzer M."/>
            <person name="Kay R.R."/>
            <person name="Williams J.G."/>
            <person name="Dear P.H."/>
            <person name="Noegel A.A."/>
            <person name="Barrell B.G."/>
            <person name="Kuspa A."/>
        </authorList>
    </citation>
    <scope>NUCLEOTIDE SEQUENCE [LARGE SCALE GENOMIC DNA]</scope>
    <source>
        <strain>AX4</strain>
    </source>
</reference>
<gene>
    <name type="primary">ggps1</name>
    <name type="ORF">DDB_G0293588</name>
</gene>
<accession>Q54BK1</accession>
<dbReference type="EC" id="2.5.1.-"/>
<dbReference type="EC" id="2.5.1.1"/>
<dbReference type="EC" id="2.5.1.29"/>
<dbReference type="EC" id="2.5.1.10"/>
<dbReference type="EMBL" id="AAFI02000218">
    <property type="protein sequence ID" value="EAL60606.1"/>
    <property type="molecule type" value="Genomic_DNA"/>
</dbReference>
<dbReference type="RefSeq" id="XP_629028.1">
    <property type="nucleotide sequence ID" value="XM_629026.1"/>
</dbReference>
<dbReference type="SMR" id="Q54BK1"/>
<dbReference type="FunCoup" id="Q54BK1">
    <property type="interactions" value="37"/>
</dbReference>
<dbReference type="STRING" id="44689.Q54BK1"/>
<dbReference type="PaxDb" id="44689-DDB0233098"/>
<dbReference type="EnsemblProtists" id="EAL60606">
    <property type="protein sequence ID" value="EAL60606"/>
    <property type="gene ID" value="DDB_G0293588"/>
</dbReference>
<dbReference type="GeneID" id="8629314"/>
<dbReference type="KEGG" id="ddi:DDB_G0293588"/>
<dbReference type="dictyBase" id="DDB_G0293588">
    <property type="gene designation" value="ggps1"/>
</dbReference>
<dbReference type="VEuPathDB" id="AmoebaDB:DDB_G0293588"/>
<dbReference type="eggNOG" id="KOG0777">
    <property type="taxonomic scope" value="Eukaryota"/>
</dbReference>
<dbReference type="HOGENOM" id="CLU_014015_6_0_1"/>
<dbReference type="InParanoid" id="Q54BK1"/>
<dbReference type="OMA" id="FYSKAFF"/>
<dbReference type="PhylomeDB" id="Q54BK1"/>
<dbReference type="Reactome" id="R-DDI-191273">
    <property type="pathway name" value="Cholesterol biosynthesis"/>
</dbReference>
<dbReference type="UniPathway" id="UPA00259">
    <property type="reaction ID" value="UER00368"/>
</dbReference>
<dbReference type="UniPathway" id="UPA00260">
    <property type="reaction ID" value="UER00369"/>
</dbReference>
<dbReference type="UniPathway" id="UPA00389">
    <property type="reaction ID" value="UER00564"/>
</dbReference>
<dbReference type="PRO" id="PR:Q54BK1"/>
<dbReference type="Proteomes" id="UP000002195">
    <property type="component" value="Chromosome 6"/>
</dbReference>
<dbReference type="GO" id="GO:0005737">
    <property type="term" value="C:cytoplasm"/>
    <property type="evidence" value="ECO:0007669"/>
    <property type="project" value="UniProtKB-SubCell"/>
</dbReference>
<dbReference type="GO" id="GO:0004337">
    <property type="term" value="F:(2E,6E)-farnesyl diphosphate synthase activity"/>
    <property type="evidence" value="ECO:0000250"/>
    <property type="project" value="dictyBase"/>
</dbReference>
<dbReference type="GO" id="GO:0004161">
    <property type="term" value="F:dimethylallyltranstransferase activity"/>
    <property type="evidence" value="ECO:0007669"/>
    <property type="project" value="UniProtKB-EC"/>
</dbReference>
<dbReference type="GO" id="GO:0004311">
    <property type="term" value="F:geranylgeranyl diphosphate synthase activity"/>
    <property type="evidence" value="ECO:0000250"/>
    <property type="project" value="dictyBase"/>
</dbReference>
<dbReference type="GO" id="GO:0046872">
    <property type="term" value="F:metal ion binding"/>
    <property type="evidence" value="ECO:0007669"/>
    <property type="project" value="UniProtKB-KW"/>
</dbReference>
<dbReference type="GO" id="GO:0045337">
    <property type="term" value="P:farnesyl diphosphate biosynthetic process"/>
    <property type="evidence" value="ECO:0007669"/>
    <property type="project" value="UniProtKB-UniPathway"/>
</dbReference>
<dbReference type="GO" id="GO:0033384">
    <property type="term" value="P:geranyl diphosphate biosynthetic process"/>
    <property type="evidence" value="ECO:0007669"/>
    <property type="project" value="UniProtKB-UniPathway"/>
</dbReference>
<dbReference type="GO" id="GO:0033386">
    <property type="term" value="P:geranylgeranyl diphosphate biosynthetic process"/>
    <property type="evidence" value="ECO:0007669"/>
    <property type="project" value="UniProtKB-UniPathway"/>
</dbReference>
<dbReference type="GO" id="GO:0008299">
    <property type="term" value="P:isoprenoid biosynthetic process"/>
    <property type="evidence" value="ECO:0000318"/>
    <property type="project" value="GO_Central"/>
</dbReference>
<dbReference type="CDD" id="cd00685">
    <property type="entry name" value="Trans_IPPS_HT"/>
    <property type="match status" value="1"/>
</dbReference>
<dbReference type="Gene3D" id="1.10.600.10">
    <property type="entry name" value="Farnesyl Diphosphate Synthase"/>
    <property type="match status" value="1"/>
</dbReference>
<dbReference type="InterPro" id="IPR008949">
    <property type="entry name" value="Isoprenoid_synthase_dom_sf"/>
</dbReference>
<dbReference type="InterPro" id="IPR000092">
    <property type="entry name" value="Polyprenyl_synt"/>
</dbReference>
<dbReference type="InterPro" id="IPR033749">
    <property type="entry name" value="Polyprenyl_synt_CS"/>
</dbReference>
<dbReference type="PANTHER" id="PTHR12001">
    <property type="entry name" value="GERANYLGERANYL PYROPHOSPHATE SYNTHASE"/>
    <property type="match status" value="1"/>
</dbReference>
<dbReference type="PANTHER" id="PTHR12001:SF44">
    <property type="entry name" value="GERANYLGERANYL PYROPHOSPHATE SYNTHASE"/>
    <property type="match status" value="1"/>
</dbReference>
<dbReference type="Pfam" id="PF00348">
    <property type="entry name" value="polyprenyl_synt"/>
    <property type="match status" value="1"/>
</dbReference>
<dbReference type="SFLD" id="SFLDS00005">
    <property type="entry name" value="Isoprenoid_Synthase_Type_I"/>
    <property type="match status" value="1"/>
</dbReference>
<dbReference type="SUPFAM" id="SSF48576">
    <property type="entry name" value="Terpenoid synthases"/>
    <property type="match status" value="1"/>
</dbReference>
<dbReference type="PROSITE" id="PS00723">
    <property type="entry name" value="POLYPRENYL_SYNTHASE_1"/>
    <property type="match status" value="1"/>
</dbReference>
<dbReference type="PROSITE" id="PS00444">
    <property type="entry name" value="POLYPRENYL_SYNTHASE_2"/>
    <property type="match status" value="1"/>
</dbReference>
<evidence type="ECO:0000250" key="1"/>
<evidence type="ECO:0000250" key="2">
    <source>
        <dbReference type="UniProtKB" id="P14324"/>
    </source>
</evidence>
<evidence type="ECO:0000250" key="3">
    <source>
        <dbReference type="UniProtKB" id="Q12051"/>
    </source>
</evidence>
<evidence type="ECO:0000305" key="4"/>